<protein>
    <recommendedName>
        <fullName>Nitrogen permease regulator 3</fullName>
    </recommendedName>
    <alternativeName>
        <fullName>Required for meiotic nuclear division protein 11</fullName>
    </alternativeName>
</protein>
<name>NPR3_ASPCL</name>
<gene>
    <name type="primary">npr3</name>
    <name type="synonym">rmd11</name>
    <name type="ORF">ACLA_025740</name>
</gene>
<accession>A1CQD6</accession>
<organism>
    <name type="scientific">Aspergillus clavatus (strain ATCC 1007 / CBS 513.65 / DSM 816 / NCTC 3887 / NRRL 1 / QM 1276 / 107)</name>
    <dbReference type="NCBI Taxonomy" id="344612"/>
    <lineage>
        <taxon>Eukaryota</taxon>
        <taxon>Fungi</taxon>
        <taxon>Dikarya</taxon>
        <taxon>Ascomycota</taxon>
        <taxon>Pezizomycotina</taxon>
        <taxon>Eurotiomycetes</taxon>
        <taxon>Eurotiomycetidae</taxon>
        <taxon>Eurotiales</taxon>
        <taxon>Aspergillaceae</taxon>
        <taxon>Aspergillus</taxon>
        <taxon>Aspergillus subgen. Fumigati</taxon>
    </lineage>
</organism>
<sequence length="869" mass="95856">MSSIARPPDPCLVAIILIVRSRAGPRFVFHYPPNPLSENGLKPALRSRRTSRSRTGQGYKSNDSSSSEESGSSSDEDEDEHQHQLHSQSNNHSQTHLSGSVVSARRSSNFGLDDHVTMSVSPGGDSQRAGSIGSSRTLFRRRGGNSDVEEESGAGSDRQEDGAGTAGGPNRPPWESLLGLPADVWEKLLSPSPAWHKRRFEVGINDLAFIGWPVFVREDGTWRKQKRKKKKEKKKARAEWEGGELGHNENSEDAPDGEDGDGEGGGGLKLIVASTETLSPKHMTFSEAKRASVASNLAARASSDCLDVDDKDSMTMFNVVFVLDPPLLEYSMRIKELYDNIIKKFAKALKWEQARTDYVWREAQHITHLKEKAKERRTSLNTLYSELINQSSLARAIYTVFNSISASKIASVPLSPDVSISLQIPPLTSTPYLSGPADKAYPGLWLTTADSVTPVDDPTAEEIAAPHQVLAKNFALLLLDNEATILKDVEASGGALAPALAHYLRCSKPTKSFAQISATSGIPLSTIQMLASHLVYWRRARAIPPIHQRDTYIVSPNCDLSKLEVATAAYQAAFPTLPSLPKMLSALSGTPRPYGSFIPSKDHKETYFAILAWLLRGGWVTQLRSFARVKVTPEIKMAVEVALRREEVDKYLRKSRPSGPGKSGIDGEEGSGAEEVDDASSSSSSSLSSHGSGEETPMPGRYKLESEMRLEHSLLDRNTSLRTASLILFPHRASPLESRWLEEIVSQFPDKPRSANRLRGHGSGSRGGEGDPECAGICTPMKDLWPTYIKYFNGLDALEKIPIRESLKRKLAWQVLTRLGMVTSQQTSIELDPREQVLVSVRHWNNELIYFQFLIFPRDINSIIPHHAR</sequence>
<comment type="function">
    <text evidence="1">Mediates inactivation of the TORC1 complex in response to amino acid starvation. Required for meiotic nuclear division (By similarity).</text>
</comment>
<comment type="similarity">
    <text evidence="4">Belongs to the NPR3 family.</text>
</comment>
<dbReference type="EMBL" id="DS027059">
    <property type="protein sequence ID" value="EAW07857.1"/>
    <property type="molecule type" value="Genomic_DNA"/>
</dbReference>
<dbReference type="RefSeq" id="XP_001269283.1">
    <property type="nucleotide sequence ID" value="XM_001269282.1"/>
</dbReference>
<dbReference type="SMR" id="A1CQD6"/>
<dbReference type="STRING" id="344612.A1CQD6"/>
<dbReference type="EnsemblFungi" id="EAW07857">
    <property type="protein sequence ID" value="EAW07857"/>
    <property type="gene ID" value="ACLA_025740"/>
</dbReference>
<dbReference type="GeneID" id="4701823"/>
<dbReference type="KEGG" id="act:ACLA_025740"/>
<dbReference type="VEuPathDB" id="FungiDB:ACLA_025740"/>
<dbReference type="eggNOG" id="KOG3830">
    <property type="taxonomic scope" value="Eukaryota"/>
</dbReference>
<dbReference type="HOGENOM" id="CLU_014314_1_0_1"/>
<dbReference type="OMA" id="RTDYVWK"/>
<dbReference type="OrthoDB" id="18648at2759"/>
<dbReference type="Proteomes" id="UP000006701">
    <property type="component" value="Unassembled WGS sequence"/>
</dbReference>
<dbReference type="GO" id="GO:1990130">
    <property type="term" value="C:GATOR1 complex"/>
    <property type="evidence" value="ECO:0007669"/>
    <property type="project" value="TreeGrafter"/>
</dbReference>
<dbReference type="GO" id="GO:0034198">
    <property type="term" value="P:cellular response to amino acid starvation"/>
    <property type="evidence" value="ECO:0007669"/>
    <property type="project" value="TreeGrafter"/>
</dbReference>
<dbReference type="GO" id="GO:0051321">
    <property type="term" value="P:meiotic cell cycle"/>
    <property type="evidence" value="ECO:0007669"/>
    <property type="project" value="UniProtKB-KW"/>
</dbReference>
<dbReference type="GO" id="GO:1904262">
    <property type="term" value="P:negative regulation of TORC1 signaling"/>
    <property type="evidence" value="ECO:0007669"/>
    <property type="project" value="TreeGrafter"/>
</dbReference>
<dbReference type="GO" id="GO:0010508">
    <property type="term" value="P:positive regulation of autophagy"/>
    <property type="evidence" value="ECO:0007669"/>
    <property type="project" value="TreeGrafter"/>
</dbReference>
<dbReference type="GO" id="GO:0038202">
    <property type="term" value="P:TORC1 signaling"/>
    <property type="evidence" value="ECO:0007669"/>
    <property type="project" value="TreeGrafter"/>
</dbReference>
<dbReference type="InterPro" id="IPR056603">
    <property type="entry name" value="HTH_NPRL3"/>
</dbReference>
<dbReference type="InterPro" id="IPR005365">
    <property type="entry name" value="Npr3"/>
</dbReference>
<dbReference type="PANTHER" id="PTHR13153">
    <property type="entry name" value="CGTHBA PROTEIN -14 GENE PROTEIN"/>
    <property type="match status" value="1"/>
</dbReference>
<dbReference type="PANTHER" id="PTHR13153:SF5">
    <property type="entry name" value="GATOR COMPLEX PROTEIN NPRL3"/>
    <property type="match status" value="1"/>
</dbReference>
<dbReference type="Pfam" id="PF24064">
    <property type="entry name" value="HTH_NPRL3"/>
    <property type="match status" value="1"/>
</dbReference>
<dbReference type="Pfam" id="PF03666">
    <property type="entry name" value="NPR3"/>
    <property type="match status" value="1"/>
</dbReference>
<feature type="signal peptide" evidence="2">
    <location>
        <begin position="1"/>
        <end position="23"/>
    </location>
</feature>
<feature type="chain" id="PRO_0000301791" description="Nitrogen permease regulator 3">
    <location>
        <begin position="24"/>
        <end position="869"/>
    </location>
</feature>
<feature type="region of interest" description="Disordered" evidence="3">
    <location>
        <begin position="30"/>
        <end position="175"/>
    </location>
</feature>
<feature type="region of interest" description="Disordered" evidence="3">
    <location>
        <begin position="222"/>
        <end position="266"/>
    </location>
</feature>
<feature type="region of interest" description="Disordered" evidence="3">
    <location>
        <begin position="652"/>
        <end position="700"/>
    </location>
</feature>
<feature type="region of interest" description="Disordered" evidence="3">
    <location>
        <begin position="751"/>
        <end position="773"/>
    </location>
</feature>
<feature type="compositionally biased region" description="Low complexity" evidence="3">
    <location>
        <begin position="61"/>
        <end position="73"/>
    </location>
</feature>
<feature type="compositionally biased region" description="Low complexity" evidence="3">
    <location>
        <begin position="85"/>
        <end position="98"/>
    </location>
</feature>
<feature type="compositionally biased region" description="Polar residues" evidence="3">
    <location>
        <begin position="128"/>
        <end position="137"/>
    </location>
</feature>
<feature type="compositionally biased region" description="Basic residues" evidence="3">
    <location>
        <begin position="223"/>
        <end position="236"/>
    </location>
</feature>
<feature type="compositionally biased region" description="Basic and acidic residues" evidence="3">
    <location>
        <begin position="237"/>
        <end position="250"/>
    </location>
</feature>
<feature type="compositionally biased region" description="Acidic residues" evidence="3">
    <location>
        <begin position="251"/>
        <end position="262"/>
    </location>
</feature>
<feature type="compositionally biased region" description="Acidic residues" evidence="3">
    <location>
        <begin position="666"/>
        <end position="678"/>
    </location>
</feature>
<feature type="compositionally biased region" description="Low complexity" evidence="3">
    <location>
        <begin position="680"/>
        <end position="689"/>
    </location>
</feature>
<keyword id="KW-0469">Meiosis</keyword>
<keyword id="KW-1185">Reference proteome</keyword>
<keyword id="KW-0732">Signal</keyword>
<reference key="1">
    <citation type="journal article" date="2008" name="PLoS Genet.">
        <title>Genomic islands in the pathogenic filamentous fungus Aspergillus fumigatus.</title>
        <authorList>
            <person name="Fedorova N.D."/>
            <person name="Khaldi N."/>
            <person name="Joardar V.S."/>
            <person name="Maiti R."/>
            <person name="Amedeo P."/>
            <person name="Anderson M.J."/>
            <person name="Crabtree J."/>
            <person name="Silva J.C."/>
            <person name="Badger J.H."/>
            <person name="Albarraq A."/>
            <person name="Angiuoli S."/>
            <person name="Bussey H."/>
            <person name="Bowyer P."/>
            <person name="Cotty P.J."/>
            <person name="Dyer P.S."/>
            <person name="Egan A."/>
            <person name="Galens K."/>
            <person name="Fraser-Liggett C.M."/>
            <person name="Haas B.J."/>
            <person name="Inman J.M."/>
            <person name="Kent R."/>
            <person name="Lemieux S."/>
            <person name="Malavazi I."/>
            <person name="Orvis J."/>
            <person name="Roemer T."/>
            <person name="Ronning C.M."/>
            <person name="Sundaram J.P."/>
            <person name="Sutton G."/>
            <person name="Turner G."/>
            <person name="Venter J.C."/>
            <person name="White O.R."/>
            <person name="Whitty B.R."/>
            <person name="Youngman P."/>
            <person name="Wolfe K.H."/>
            <person name="Goldman G.H."/>
            <person name="Wortman J.R."/>
            <person name="Jiang B."/>
            <person name="Denning D.W."/>
            <person name="Nierman W.C."/>
        </authorList>
    </citation>
    <scope>NUCLEOTIDE SEQUENCE [LARGE SCALE GENOMIC DNA]</scope>
    <source>
        <strain>ATCC 1007 / CBS 513.65 / DSM 816 / NCTC 3887 / NRRL 1 / QM 1276 / 107</strain>
    </source>
</reference>
<proteinExistence type="inferred from homology"/>
<evidence type="ECO:0000250" key="1"/>
<evidence type="ECO:0000255" key="2"/>
<evidence type="ECO:0000256" key="3">
    <source>
        <dbReference type="SAM" id="MobiDB-lite"/>
    </source>
</evidence>
<evidence type="ECO:0000305" key="4"/>